<feature type="signal peptide" evidence="2">
    <location>
        <begin position="1"/>
        <end position="20"/>
    </location>
</feature>
<feature type="chain" id="PRO_0000420716" description="Turripeptide Gsg9.2">
    <location>
        <begin position="21"/>
        <end position="70"/>
    </location>
</feature>
<feature type="domain" description="Kazal-like" evidence="3">
    <location>
        <begin position="21"/>
        <end position="70"/>
    </location>
</feature>
<feature type="site" description="Reactive bond" evidence="3">
    <location>
        <begin position="32"/>
        <end position="33"/>
    </location>
</feature>
<feature type="disulfide bond" evidence="3">
    <location>
        <begin position="26"/>
        <end position="56"/>
    </location>
</feature>
<feature type="disulfide bond" evidence="3">
    <location>
        <begin position="30"/>
        <end position="49"/>
    </location>
</feature>
<feature type="disulfide bond" evidence="3">
    <location>
        <begin position="38"/>
        <end position="70"/>
    </location>
</feature>
<keyword id="KW-1015">Disulfide bond</keyword>
<keyword id="KW-0872">Ion channel impairing toxin</keyword>
<keyword id="KW-0528">Neurotoxin</keyword>
<keyword id="KW-0646">Protease inhibitor</keyword>
<keyword id="KW-0964">Secreted</keyword>
<keyword id="KW-0722">Serine protease inhibitor</keyword>
<keyword id="KW-0732">Signal</keyword>
<keyword id="KW-0800">Toxin</keyword>
<reference key="1">
    <citation type="journal article" date="2012" name="Ann. N. Y. Acad. Sci.">
        <title>Adaptive radiation of venomous marine snail lineages and the accelerated evolution of venom peptide genes.</title>
        <authorList>
            <person name="Olivera B.M."/>
            <person name="Watkins M."/>
            <person name="Bandyopadhyay P."/>
            <person name="Imperial J.S."/>
            <person name="de la Cotera E.P."/>
            <person name="Aguilar M.B."/>
            <person name="Vera E.L."/>
            <person name="Concepcion G.P."/>
            <person name="Lluisma A."/>
        </authorList>
    </citation>
    <scope>NUCLEOTIDE SEQUENCE</scope>
</reference>
<accession>P0DKT2</accession>
<sequence>MKVYCLLLVLLVGLVSQAHGQLDKKCQMVCTMDYRPVCGSDGRTYPNKCTLTSTACMSQRSITVFHDGEC</sequence>
<dbReference type="SMR" id="P0DKT2"/>
<dbReference type="GO" id="GO:0005576">
    <property type="term" value="C:extracellular region"/>
    <property type="evidence" value="ECO:0007669"/>
    <property type="project" value="UniProtKB-SubCell"/>
</dbReference>
<dbReference type="GO" id="GO:0099106">
    <property type="term" value="F:ion channel regulator activity"/>
    <property type="evidence" value="ECO:0007669"/>
    <property type="project" value="UniProtKB-KW"/>
</dbReference>
<dbReference type="GO" id="GO:0004867">
    <property type="term" value="F:serine-type endopeptidase inhibitor activity"/>
    <property type="evidence" value="ECO:0007669"/>
    <property type="project" value="UniProtKB-KW"/>
</dbReference>
<dbReference type="GO" id="GO:0090729">
    <property type="term" value="F:toxin activity"/>
    <property type="evidence" value="ECO:0007669"/>
    <property type="project" value="UniProtKB-KW"/>
</dbReference>
<dbReference type="GO" id="GO:0030154">
    <property type="term" value="P:cell differentiation"/>
    <property type="evidence" value="ECO:0007669"/>
    <property type="project" value="TreeGrafter"/>
</dbReference>
<dbReference type="CDD" id="cd00104">
    <property type="entry name" value="KAZAL_FS"/>
    <property type="match status" value="1"/>
</dbReference>
<dbReference type="Gene3D" id="3.30.60.30">
    <property type="match status" value="1"/>
</dbReference>
<dbReference type="InterPro" id="IPR002350">
    <property type="entry name" value="Kazal_dom"/>
</dbReference>
<dbReference type="InterPro" id="IPR036058">
    <property type="entry name" value="Kazal_dom_sf"/>
</dbReference>
<dbReference type="InterPro" id="IPR001239">
    <property type="entry name" value="Prot_inh_Kazal-m"/>
</dbReference>
<dbReference type="InterPro" id="IPR050653">
    <property type="entry name" value="Prot_Inhib_GrowthFact_Antg"/>
</dbReference>
<dbReference type="PANTHER" id="PTHR10913:SF45">
    <property type="entry name" value="FOLLISTATIN, ISOFORM A-RELATED"/>
    <property type="match status" value="1"/>
</dbReference>
<dbReference type="PANTHER" id="PTHR10913">
    <property type="entry name" value="FOLLISTATIN-RELATED"/>
    <property type="match status" value="1"/>
</dbReference>
<dbReference type="Pfam" id="PF00050">
    <property type="entry name" value="Kazal_1"/>
    <property type="match status" value="1"/>
</dbReference>
<dbReference type="PRINTS" id="PR00290">
    <property type="entry name" value="KAZALINHBTR"/>
</dbReference>
<dbReference type="SMART" id="SM00280">
    <property type="entry name" value="KAZAL"/>
    <property type="match status" value="1"/>
</dbReference>
<dbReference type="SUPFAM" id="SSF100895">
    <property type="entry name" value="Kazal-type serine protease inhibitors"/>
    <property type="match status" value="1"/>
</dbReference>
<dbReference type="PROSITE" id="PS51465">
    <property type="entry name" value="KAZAL_2"/>
    <property type="match status" value="1"/>
</dbReference>
<proteinExistence type="evidence at transcript level"/>
<organism>
    <name type="scientific">Gemmula sogodensis</name>
    <name type="common">Gem-turris</name>
    <dbReference type="NCBI Taxonomy" id="439591"/>
    <lineage>
        <taxon>Eukaryota</taxon>
        <taxon>Metazoa</taxon>
        <taxon>Spiralia</taxon>
        <taxon>Lophotrochozoa</taxon>
        <taxon>Mollusca</taxon>
        <taxon>Gastropoda</taxon>
        <taxon>Caenogastropoda</taxon>
        <taxon>Neogastropoda</taxon>
        <taxon>Conoidea</taxon>
        <taxon>Turridae</taxon>
        <taxon>Gemmula</taxon>
    </lineage>
</organism>
<evidence type="ECO:0000250" key="1"/>
<evidence type="ECO:0000255" key="2"/>
<evidence type="ECO:0000255" key="3">
    <source>
        <dbReference type="PROSITE-ProRule" id="PRU00798"/>
    </source>
</evidence>
<evidence type="ECO:0000305" key="4"/>
<protein>
    <recommendedName>
        <fullName>Turripeptide Gsg9.2</fullName>
    </recommendedName>
</protein>
<comment type="function">
    <text evidence="1">Acts as a neurotoxin by inhibiting an ion channel (By similarity). May also act as a serine protease inhibitor, since it possess the kazal serine protease inhibitor signature.</text>
</comment>
<comment type="subcellular location">
    <subcellularLocation>
        <location evidence="1">Secreted</location>
    </subcellularLocation>
</comment>
<comment type="tissue specificity">
    <text>Expressed by the venom duct.</text>
</comment>
<comment type="domain">
    <text>The cysteine framework is IX (C-C-C-C-C-C).</text>
</comment>
<comment type="similarity">
    <text evidence="4">Belongs to the conopeptide P-like superfamily.</text>
</comment>
<name>TU92_GEMSO</name>